<accession>P9WG87</accession>
<accession>L0T635</accession>
<accession>O50465</accession>
<accession>Q7D8I7</accession>
<proteinExistence type="inferred from homology"/>
<dbReference type="EMBL" id="AL123456">
    <property type="protein sequence ID" value="CCP44006.1"/>
    <property type="molecule type" value="Genomic_DNA"/>
</dbReference>
<dbReference type="PIR" id="A70954">
    <property type="entry name" value="A70954"/>
</dbReference>
<dbReference type="RefSeq" id="NP_215766.1">
    <property type="nucleotide sequence ID" value="NC_000962.3"/>
</dbReference>
<dbReference type="RefSeq" id="WP_003898791.1">
    <property type="nucleotide sequence ID" value="NZ_NVQJ01000049.1"/>
</dbReference>
<dbReference type="SMR" id="P9WG87"/>
<dbReference type="FunCoup" id="P9WG87">
    <property type="interactions" value="54"/>
</dbReference>
<dbReference type="STRING" id="83332.Rv1250"/>
<dbReference type="PaxDb" id="83332-Rv1250"/>
<dbReference type="DNASU" id="887073"/>
<dbReference type="GeneID" id="887073"/>
<dbReference type="KEGG" id="mtu:Rv1250"/>
<dbReference type="KEGG" id="mtv:RVBD_1250"/>
<dbReference type="PATRIC" id="fig|83332.12.peg.1399"/>
<dbReference type="TubercuList" id="Rv1250"/>
<dbReference type="eggNOG" id="COG0477">
    <property type="taxonomic scope" value="Bacteria"/>
</dbReference>
<dbReference type="InParanoid" id="P9WG87"/>
<dbReference type="OrthoDB" id="7375466at2"/>
<dbReference type="PhylomeDB" id="P9WG87"/>
<dbReference type="Proteomes" id="UP000001584">
    <property type="component" value="Chromosome"/>
</dbReference>
<dbReference type="GO" id="GO:0016020">
    <property type="term" value="C:membrane"/>
    <property type="evidence" value="ECO:0000318"/>
    <property type="project" value="GO_Central"/>
</dbReference>
<dbReference type="GO" id="GO:0005886">
    <property type="term" value="C:plasma membrane"/>
    <property type="evidence" value="ECO:0007005"/>
    <property type="project" value="MTBBASE"/>
</dbReference>
<dbReference type="GO" id="GO:0022857">
    <property type="term" value="F:transmembrane transporter activity"/>
    <property type="evidence" value="ECO:0007669"/>
    <property type="project" value="InterPro"/>
</dbReference>
<dbReference type="CDD" id="cd17321">
    <property type="entry name" value="MFS_MMR_MDR_like"/>
    <property type="match status" value="1"/>
</dbReference>
<dbReference type="FunFam" id="1.20.1720.10:FF:000021">
    <property type="entry name" value="Drug resistance transporter, EmrB/QacA subfamily"/>
    <property type="match status" value="1"/>
</dbReference>
<dbReference type="Gene3D" id="1.20.1250.20">
    <property type="entry name" value="MFS general substrate transporter like domains"/>
    <property type="match status" value="1"/>
</dbReference>
<dbReference type="Gene3D" id="1.20.1720.10">
    <property type="entry name" value="Multidrug resistance protein D"/>
    <property type="match status" value="1"/>
</dbReference>
<dbReference type="InterPro" id="IPR004638">
    <property type="entry name" value="EmrB-like"/>
</dbReference>
<dbReference type="InterPro" id="IPR011701">
    <property type="entry name" value="MFS"/>
</dbReference>
<dbReference type="InterPro" id="IPR020846">
    <property type="entry name" value="MFS_dom"/>
</dbReference>
<dbReference type="InterPro" id="IPR036259">
    <property type="entry name" value="MFS_trans_sf"/>
</dbReference>
<dbReference type="NCBIfam" id="TIGR00711">
    <property type="entry name" value="efflux_EmrB"/>
    <property type="match status" value="1"/>
</dbReference>
<dbReference type="PANTHER" id="PTHR42718:SF42">
    <property type="entry name" value="EXPORT PROTEIN"/>
    <property type="match status" value="1"/>
</dbReference>
<dbReference type="PANTHER" id="PTHR42718">
    <property type="entry name" value="MAJOR FACILITATOR SUPERFAMILY MULTIDRUG TRANSPORTER MFSC"/>
    <property type="match status" value="1"/>
</dbReference>
<dbReference type="Pfam" id="PF07690">
    <property type="entry name" value="MFS_1"/>
    <property type="match status" value="1"/>
</dbReference>
<dbReference type="SUPFAM" id="SSF103473">
    <property type="entry name" value="MFS general substrate transporter"/>
    <property type="match status" value="1"/>
</dbReference>
<dbReference type="PROSITE" id="PS50850">
    <property type="entry name" value="MFS"/>
    <property type="match status" value="1"/>
</dbReference>
<comment type="subcellular location">
    <subcellularLocation>
        <location evidence="3">Cell membrane</location>
        <topology evidence="3">Multi-pass membrane protein</topology>
    </subcellularLocation>
</comment>
<comment type="similarity">
    <text evidence="3">Belongs to the major facilitator superfamily. EmrB family.</text>
</comment>
<name>Y1250_MYCTU</name>
<keyword id="KW-1003">Cell membrane</keyword>
<keyword id="KW-0472">Membrane</keyword>
<keyword id="KW-1185">Reference proteome</keyword>
<keyword id="KW-0812">Transmembrane</keyword>
<keyword id="KW-1133">Transmembrane helix</keyword>
<keyword id="KW-0813">Transport</keyword>
<feature type="chain" id="PRO_0000390688" description="Uncharacterized MFS-type transporter Rv1250">
    <location>
        <begin position="1"/>
        <end position="579"/>
    </location>
</feature>
<feature type="transmembrane region" description="Helical" evidence="1">
    <location>
        <begin position="20"/>
        <end position="40"/>
    </location>
</feature>
<feature type="transmembrane region" description="Helical" evidence="1">
    <location>
        <begin position="54"/>
        <end position="74"/>
    </location>
</feature>
<feature type="transmembrane region" description="Helical" evidence="1">
    <location>
        <begin position="86"/>
        <end position="106"/>
    </location>
</feature>
<feature type="transmembrane region" description="Helical" evidence="1">
    <location>
        <begin position="142"/>
        <end position="162"/>
    </location>
</feature>
<feature type="transmembrane region" description="Helical" evidence="1">
    <location>
        <begin position="174"/>
        <end position="194"/>
    </location>
</feature>
<feature type="transmembrane region" description="Helical" evidence="1">
    <location>
        <begin position="204"/>
        <end position="224"/>
    </location>
</feature>
<feature type="transmembrane region" description="Helical" evidence="1">
    <location>
        <begin position="234"/>
        <end position="254"/>
    </location>
</feature>
<feature type="transmembrane region" description="Helical" evidence="1">
    <location>
        <begin position="279"/>
        <end position="299"/>
    </location>
</feature>
<feature type="transmembrane region" description="Helical" evidence="1">
    <location>
        <begin position="310"/>
        <end position="330"/>
    </location>
</feature>
<feature type="transmembrane region" description="Helical" evidence="1">
    <location>
        <begin position="335"/>
        <end position="355"/>
    </location>
</feature>
<feature type="transmembrane region" description="Helical" evidence="1">
    <location>
        <begin position="366"/>
        <end position="386"/>
    </location>
</feature>
<feature type="transmembrane region" description="Helical" evidence="1">
    <location>
        <begin position="467"/>
        <end position="487"/>
    </location>
</feature>
<feature type="region of interest" description="Disordered" evidence="2">
    <location>
        <begin position="516"/>
        <end position="579"/>
    </location>
</feature>
<feature type="compositionally biased region" description="Low complexity" evidence="2">
    <location>
        <begin position="526"/>
        <end position="540"/>
    </location>
</feature>
<feature type="compositionally biased region" description="Polar residues" evidence="2">
    <location>
        <begin position="570"/>
        <end position="579"/>
    </location>
</feature>
<gene>
    <name type="ordered locus">Rv1250</name>
</gene>
<protein>
    <recommendedName>
        <fullName>Uncharacterized MFS-type transporter Rv1250</fullName>
    </recommendedName>
</protein>
<sequence length="579" mass="60908">MTTAIRRAAGSSYFRNPWPALWAMMVGFFMIMLDSTVVAIANPTIMAQLRIGYATVVWVTSAYLLAYAVPMLVAGRLGDRFGPKNLYLIGLGVFTVASLGCGLSSGAGMLIAARVVQGVGAGLLTPQTLSTITRIFPAHRRGVALGAWGTVASVASLVGPLAGGALVDSMGWEWIFFVNVPVGVIGLILAAYLIPALPHHPHRFDWFGVGLSGAGMFLIVFGLQQGQSANWQPWIWAVIVGGIGFMSLFVYWQARNAREPLIPLEVFNDRNFSLSNLRIAIIAFAGTGMMLPVTFYAQAVCGLSPTHTAVLFAPTAIVGGVLAPFVGMIIDRSHPLCVLGFGFSVLAIAMTWLLCEMAPGTPIWRLVLPFIALGVAGAFVWSPLTVTATRNLRPHLAGASSGVFNAVRQLGAVLGSASMAAFMTSRIAAEMPGGVDALTGPAGQDATVLQLPEFVREPFAAAMSQSMLLPAFVALFGIVAALFLVDFTGAAVAKEPLPESDGDADDDDYVEYILRREPEEDCDTQPLRASRPAAAAASRSGAGGPLAVSWSTSAQGMPPGPPGRRAWQADTESTAPSAL</sequence>
<reference key="1">
    <citation type="journal article" date="1998" name="Nature">
        <title>Deciphering the biology of Mycobacterium tuberculosis from the complete genome sequence.</title>
        <authorList>
            <person name="Cole S.T."/>
            <person name="Brosch R."/>
            <person name="Parkhill J."/>
            <person name="Garnier T."/>
            <person name="Churcher C.M."/>
            <person name="Harris D.E."/>
            <person name="Gordon S.V."/>
            <person name="Eiglmeier K."/>
            <person name="Gas S."/>
            <person name="Barry C.E. III"/>
            <person name="Tekaia F."/>
            <person name="Badcock K."/>
            <person name="Basham D."/>
            <person name="Brown D."/>
            <person name="Chillingworth T."/>
            <person name="Connor R."/>
            <person name="Davies R.M."/>
            <person name="Devlin K."/>
            <person name="Feltwell T."/>
            <person name="Gentles S."/>
            <person name="Hamlin N."/>
            <person name="Holroyd S."/>
            <person name="Hornsby T."/>
            <person name="Jagels K."/>
            <person name="Krogh A."/>
            <person name="McLean J."/>
            <person name="Moule S."/>
            <person name="Murphy L.D."/>
            <person name="Oliver S."/>
            <person name="Osborne J."/>
            <person name="Quail M.A."/>
            <person name="Rajandream M.A."/>
            <person name="Rogers J."/>
            <person name="Rutter S."/>
            <person name="Seeger K."/>
            <person name="Skelton S."/>
            <person name="Squares S."/>
            <person name="Squares R."/>
            <person name="Sulston J.E."/>
            <person name="Taylor K."/>
            <person name="Whitehead S."/>
            <person name="Barrell B.G."/>
        </authorList>
    </citation>
    <scope>NUCLEOTIDE SEQUENCE [LARGE SCALE GENOMIC DNA]</scope>
    <source>
        <strain>ATCC 25618 / H37Rv</strain>
    </source>
</reference>
<organism>
    <name type="scientific">Mycobacterium tuberculosis (strain ATCC 25618 / H37Rv)</name>
    <dbReference type="NCBI Taxonomy" id="83332"/>
    <lineage>
        <taxon>Bacteria</taxon>
        <taxon>Bacillati</taxon>
        <taxon>Actinomycetota</taxon>
        <taxon>Actinomycetes</taxon>
        <taxon>Mycobacteriales</taxon>
        <taxon>Mycobacteriaceae</taxon>
        <taxon>Mycobacterium</taxon>
        <taxon>Mycobacterium tuberculosis complex</taxon>
    </lineage>
</organism>
<evidence type="ECO:0000255" key="1"/>
<evidence type="ECO:0000256" key="2">
    <source>
        <dbReference type="SAM" id="MobiDB-lite"/>
    </source>
</evidence>
<evidence type="ECO:0000305" key="3"/>